<proteinExistence type="inferred from homology"/>
<keyword id="KW-1185">Reference proteome</keyword>
<keyword id="KW-0687">Ribonucleoprotein</keyword>
<keyword id="KW-0689">Ribosomal protein</keyword>
<keyword id="KW-0694">RNA-binding</keyword>
<keyword id="KW-0699">rRNA-binding</keyword>
<evidence type="ECO:0000255" key="1">
    <source>
        <dbReference type="HAMAP-Rule" id="MF_01309"/>
    </source>
</evidence>
<evidence type="ECO:0000305" key="2"/>
<name>RS3_SHIB3</name>
<protein>
    <recommendedName>
        <fullName evidence="1">Small ribosomal subunit protein uS3</fullName>
    </recommendedName>
    <alternativeName>
        <fullName evidence="2">30S ribosomal protein S3</fullName>
    </alternativeName>
</protein>
<feature type="chain" id="PRO_1000141018" description="Small ribosomal subunit protein uS3">
    <location>
        <begin position="1"/>
        <end position="233"/>
    </location>
</feature>
<feature type="domain" description="KH type-2" evidence="1">
    <location>
        <begin position="39"/>
        <end position="107"/>
    </location>
</feature>
<dbReference type="EMBL" id="CP001063">
    <property type="protein sequence ID" value="ACD08544.1"/>
    <property type="molecule type" value="Genomic_DNA"/>
</dbReference>
<dbReference type="RefSeq" id="WP_000529945.1">
    <property type="nucleotide sequence ID" value="NC_010658.1"/>
</dbReference>
<dbReference type="SMR" id="B2U2T2"/>
<dbReference type="STRING" id="344609.SbBS512_E3699"/>
<dbReference type="GeneID" id="97603663"/>
<dbReference type="KEGG" id="sbc:SbBS512_E3699"/>
<dbReference type="HOGENOM" id="CLU_058591_0_2_6"/>
<dbReference type="Proteomes" id="UP000001030">
    <property type="component" value="Chromosome"/>
</dbReference>
<dbReference type="GO" id="GO:0022627">
    <property type="term" value="C:cytosolic small ribosomal subunit"/>
    <property type="evidence" value="ECO:0007669"/>
    <property type="project" value="TreeGrafter"/>
</dbReference>
<dbReference type="GO" id="GO:0003729">
    <property type="term" value="F:mRNA binding"/>
    <property type="evidence" value="ECO:0007669"/>
    <property type="project" value="UniProtKB-UniRule"/>
</dbReference>
<dbReference type="GO" id="GO:0019843">
    <property type="term" value="F:rRNA binding"/>
    <property type="evidence" value="ECO:0007669"/>
    <property type="project" value="UniProtKB-UniRule"/>
</dbReference>
<dbReference type="GO" id="GO:0003735">
    <property type="term" value="F:structural constituent of ribosome"/>
    <property type="evidence" value="ECO:0007669"/>
    <property type="project" value="InterPro"/>
</dbReference>
<dbReference type="GO" id="GO:0006412">
    <property type="term" value="P:translation"/>
    <property type="evidence" value="ECO:0007669"/>
    <property type="project" value="UniProtKB-UniRule"/>
</dbReference>
<dbReference type="CDD" id="cd02412">
    <property type="entry name" value="KH-II_30S_S3"/>
    <property type="match status" value="1"/>
</dbReference>
<dbReference type="FunFam" id="3.30.1140.32:FF:000001">
    <property type="entry name" value="30S ribosomal protein S3"/>
    <property type="match status" value="1"/>
</dbReference>
<dbReference type="FunFam" id="3.30.300.20:FF:000001">
    <property type="entry name" value="30S ribosomal protein S3"/>
    <property type="match status" value="1"/>
</dbReference>
<dbReference type="Gene3D" id="3.30.300.20">
    <property type="match status" value="1"/>
</dbReference>
<dbReference type="Gene3D" id="3.30.1140.32">
    <property type="entry name" value="Ribosomal protein S3, C-terminal domain"/>
    <property type="match status" value="1"/>
</dbReference>
<dbReference type="HAMAP" id="MF_01309_B">
    <property type="entry name" value="Ribosomal_uS3_B"/>
    <property type="match status" value="1"/>
</dbReference>
<dbReference type="InterPro" id="IPR004087">
    <property type="entry name" value="KH_dom"/>
</dbReference>
<dbReference type="InterPro" id="IPR015946">
    <property type="entry name" value="KH_dom-like_a/b"/>
</dbReference>
<dbReference type="InterPro" id="IPR004044">
    <property type="entry name" value="KH_dom_type_2"/>
</dbReference>
<dbReference type="InterPro" id="IPR009019">
    <property type="entry name" value="KH_sf_prok-type"/>
</dbReference>
<dbReference type="InterPro" id="IPR036419">
    <property type="entry name" value="Ribosomal_S3_C_sf"/>
</dbReference>
<dbReference type="InterPro" id="IPR005704">
    <property type="entry name" value="Ribosomal_uS3_bac-typ"/>
</dbReference>
<dbReference type="InterPro" id="IPR001351">
    <property type="entry name" value="Ribosomal_uS3_C"/>
</dbReference>
<dbReference type="InterPro" id="IPR018280">
    <property type="entry name" value="Ribosomal_uS3_CS"/>
</dbReference>
<dbReference type="NCBIfam" id="TIGR01009">
    <property type="entry name" value="rpsC_bact"/>
    <property type="match status" value="1"/>
</dbReference>
<dbReference type="PANTHER" id="PTHR11760">
    <property type="entry name" value="30S/40S RIBOSOMAL PROTEIN S3"/>
    <property type="match status" value="1"/>
</dbReference>
<dbReference type="PANTHER" id="PTHR11760:SF19">
    <property type="entry name" value="SMALL RIBOSOMAL SUBUNIT PROTEIN US3C"/>
    <property type="match status" value="1"/>
</dbReference>
<dbReference type="Pfam" id="PF07650">
    <property type="entry name" value="KH_2"/>
    <property type="match status" value="1"/>
</dbReference>
<dbReference type="Pfam" id="PF00189">
    <property type="entry name" value="Ribosomal_S3_C"/>
    <property type="match status" value="1"/>
</dbReference>
<dbReference type="SMART" id="SM00322">
    <property type="entry name" value="KH"/>
    <property type="match status" value="1"/>
</dbReference>
<dbReference type="SUPFAM" id="SSF54814">
    <property type="entry name" value="Prokaryotic type KH domain (KH-domain type II)"/>
    <property type="match status" value="1"/>
</dbReference>
<dbReference type="SUPFAM" id="SSF54821">
    <property type="entry name" value="Ribosomal protein S3 C-terminal domain"/>
    <property type="match status" value="1"/>
</dbReference>
<dbReference type="PROSITE" id="PS50823">
    <property type="entry name" value="KH_TYPE_2"/>
    <property type="match status" value="1"/>
</dbReference>
<dbReference type="PROSITE" id="PS00548">
    <property type="entry name" value="RIBOSOMAL_S3"/>
    <property type="match status" value="1"/>
</dbReference>
<gene>
    <name evidence="1" type="primary">rpsC</name>
    <name type="ordered locus">SbBS512_E3699</name>
</gene>
<sequence>MGQKVHPNGIRLGIVKPWNSTWFANTKEFADNLDSDFKVRQYLTKELAKASVSRIVIERPAKSIRVTIHTARPGIVIGKKGEDVEKLRKVVADIAGVPAQINIAEVRKPELDAKLVADSITSQLERRVMFRRAMKRAVQNAMRLGAKGIKVEVSGRLGGAEIARTEWYREGRVPLHTLRADIDYNTSEAHTTYGVIGVKVWIFKGEILGGMAAVEQPEKPAAQPKKQQRKGRK</sequence>
<comment type="function">
    <text evidence="1">Binds the lower part of the 30S subunit head. Binds mRNA in the 70S ribosome, positioning it for translation.</text>
</comment>
<comment type="subunit">
    <text evidence="1">Part of the 30S ribosomal subunit. Forms a tight complex with proteins S10 and S14.</text>
</comment>
<comment type="similarity">
    <text evidence="1">Belongs to the universal ribosomal protein uS3 family.</text>
</comment>
<reference key="1">
    <citation type="submission" date="2008-05" db="EMBL/GenBank/DDBJ databases">
        <title>Complete sequence of Shigella boydii serotype 18 strain BS512.</title>
        <authorList>
            <person name="Rasko D.A."/>
            <person name="Rosovitz M."/>
            <person name="Maurelli A.T."/>
            <person name="Myers G."/>
            <person name="Seshadri R."/>
            <person name="Cer R."/>
            <person name="Jiang L."/>
            <person name="Ravel J."/>
            <person name="Sebastian Y."/>
        </authorList>
    </citation>
    <scope>NUCLEOTIDE SEQUENCE [LARGE SCALE GENOMIC DNA]</scope>
    <source>
        <strain>CDC 3083-94 / BS512</strain>
    </source>
</reference>
<accession>B2U2T2</accession>
<organism>
    <name type="scientific">Shigella boydii serotype 18 (strain CDC 3083-94 / BS512)</name>
    <dbReference type="NCBI Taxonomy" id="344609"/>
    <lineage>
        <taxon>Bacteria</taxon>
        <taxon>Pseudomonadati</taxon>
        <taxon>Pseudomonadota</taxon>
        <taxon>Gammaproteobacteria</taxon>
        <taxon>Enterobacterales</taxon>
        <taxon>Enterobacteriaceae</taxon>
        <taxon>Shigella</taxon>
    </lineage>
</organism>